<proteinExistence type="evidence at protein level"/>
<keyword id="KW-0002">3D-structure</keyword>
<keyword id="KW-0158">Chromosome</keyword>
<keyword id="KW-0903">Direct protein sequencing</keyword>
<keyword id="KW-0238">DNA-binding</keyword>
<keyword id="KW-0539">Nucleus</keyword>
<keyword id="KW-0597">Phosphoprotein</keyword>
<keyword id="KW-1185">Reference proteome</keyword>
<sequence>MSDKPKRPLSAYMLWLNSARESIKRENPGIKVTEVAKRGGELWRAMKDKSEWEAKAAKAKDDYDRAVKEFEANGGSSAANGGGAKKRAKPAKKVAKKSKKEESDEDDDDESE</sequence>
<protein>
    <recommendedName>
        <fullName>High mobility group protein D</fullName>
        <shortName>HMG-D</shortName>
    </recommendedName>
</protein>
<accession>Q05783</accession>
<accession>Q540Z0</accession>
<accession>Q9W2D3</accession>
<name>HMGD_DROME</name>
<organism>
    <name type="scientific">Drosophila melanogaster</name>
    <name type="common">Fruit fly</name>
    <dbReference type="NCBI Taxonomy" id="7227"/>
    <lineage>
        <taxon>Eukaryota</taxon>
        <taxon>Metazoa</taxon>
        <taxon>Ecdysozoa</taxon>
        <taxon>Arthropoda</taxon>
        <taxon>Hexapoda</taxon>
        <taxon>Insecta</taxon>
        <taxon>Pterygota</taxon>
        <taxon>Neoptera</taxon>
        <taxon>Endopterygota</taxon>
        <taxon>Diptera</taxon>
        <taxon>Brachycera</taxon>
        <taxon>Muscomorpha</taxon>
        <taxon>Ephydroidea</taxon>
        <taxon>Drosophilidae</taxon>
        <taxon>Drosophila</taxon>
        <taxon>Sophophora</taxon>
    </lineage>
</organism>
<gene>
    <name type="primary">HmgD</name>
    <name type="ORF">CG17950</name>
</gene>
<reference key="1">
    <citation type="journal article" date="1992" name="Mol. Cell. Biol.">
        <title>A high-mobility-group protein and its cDNAs from Drosophila melanogaster.</title>
        <authorList>
            <person name="Wagner C.R."/>
            <person name="Hamana K."/>
            <person name="Elgin S.C.R."/>
        </authorList>
    </citation>
    <scope>NUCLEOTIDE SEQUENCE [MRNA]</scope>
    <scope>PROTEIN SEQUENCE OF 45-77</scope>
    <scope>FUNCTION</scope>
    <scope>SUBCELLULAR LOCATION</scope>
    <scope>DEVELOPMENTAL STAGE</scope>
    <source>
        <tissue>Embryo</tissue>
    </source>
</reference>
<reference key="2">
    <citation type="journal article" date="1993" name="Nucleic Acids Res.">
        <title>dHMG-Z, a second HMG-1-related protein in Drosophila melanogaster.</title>
        <authorList>
            <person name="Ner S.S."/>
            <person name="Churchill M.E.A."/>
            <person name="Searles M.A."/>
            <person name="Travers A.A."/>
        </authorList>
    </citation>
    <scope>NUCLEOTIDE SEQUENCE [MRNA]</scope>
    <source>
        <strain>Canton-S</strain>
    </source>
</reference>
<reference key="3">
    <citation type="journal article" date="2006" name="Genetics">
        <title>Widespread adaptive evolution of Drosophila genes with sex-biased expression.</title>
        <authorList>
            <person name="Proeschel M."/>
            <person name="Zhang Z."/>
            <person name="Parsch J."/>
        </authorList>
    </citation>
    <scope>NUCLEOTIDE SEQUENCE [GENOMIC DNA]</scope>
    <source>
        <strain>ZBMEL131</strain>
        <strain>ZBMEL145</strain>
        <strain>ZBMEL157</strain>
        <strain>ZBMEL186</strain>
        <strain>ZBMEL191</strain>
        <strain>ZBMEL377</strain>
        <strain>ZBMEL384</strain>
        <strain>ZBMEL398</strain>
        <strain>ZBMEL82</strain>
        <strain>ZBMEL84</strain>
        <strain>ZBMEL95</strain>
    </source>
</reference>
<reference key="4">
    <citation type="journal article" date="2000" name="Science">
        <title>The genome sequence of Drosophila melanogaster.</title>
        <authorList>
            <person name="Adams M.D."/>
            <person name="Celniker S.E."/>
            <person name="Holt R.A."/>
            <person name="Evans C.A."/>
            <person name="Gocayne J.D."/>
            <person name="Amanatides P.G."/>
            <person name="Scherer S.E."/>
            <person name="Li P.W."/>
            <person name="Hoskins R.A."/>
            <person name="Galle R.F."/>
            <person name="George R.A."/>
            <person name="Lewis S.E."/>
            <person name="Richards S."/>
            <person name="Ashburner M."/>
            <person name="Henderson S.N."/>
            <person name="Sutton G.G."/>
            <person name="Wortman J.R."/>
            <person name="Yandell M.D."/>
            <person name="Zhang Q."/>
            <person name="Chen L.X."/>
            <person name="Brandon R.C."/>
            <person name="Rogers Y.-H.C."/>
            <person name="Blazej R.G."/>
            <person name="Champe M."/>
            <person name="Pfeiffer B.D."/>
            <person name="Wan K.H."/>
            <person name="Doyle C."/>
            <person name="Baxter E.G."/>
            <person name="Helt G."/>
            <person name="Nelson C.R."/>
            <person name="Miklos G.L.G."/>
            <person name="Abril J.F."/>
            <person name="Agbayani A."/>
            <person name="An H.-J."/>
            <person name="Andrews-Pfannkoch C."/>
            <person name="Baldwin D."/>
            <person name="Ballew R.M."/>
            <person name="Basu A."/>
            <person name="Baxendale J."/>
            <person name="Bayraktaroglu L."/>
            <person name="Beasley E.M."/>
            <person name="Beeson K.Y."/>
            <person name="Benos P.V."/>
            <person name="Berman B.P."/>
            <person name="Bhandari D."/>
            <person name="Bolshakov S."/>
            <person name="Borkova D."/>
            <person name="Botchan M.R."/>
            <person name="Bouck J."/>
            <person name="Brokstein P."/>
            <person name="Brottier P."/>
            <person name="Burtis K.C."/>
            <person name="Busam D.A."/>
            <person name="Butler H."/>
            <person name="Cadieu E."/>
            <person name="Center A."/>
            <person name="Chandra I."/>
            <person name="Cherry J.M."/>
            <person name="Cawley S."/>
            <person name="Dahlke C."/>
            <person name="Davenport L.B."/>
            <person name="Davies P."/>
            <person name="de Pablos B."/>
            <person name="Delcher A."/>
            <person name="Deng Z."/>
            <person name="Mays A.D."/>
            <person name="Dew I."/>
            <person name="Dietz S.M."/>
            <person name="Dodson K."/>
            <person name="Doup L.E."/>
            <person name="Downes M."/>
            <person name="Dugan-Rocha S."/>
            <person name="Dunkov B.C."/>
            <person name="Dunn P."/>
            <person name="Durbin K.J."/>
            <person name="Evangelista C.C."/>
            <person name="Ferraz C."/>
            <person name="Ferriera S."/>
            <person name="Fleischmann W."/>
            <person name="Fosler C."/>
            <person name="Gabrielian A.E."/>
            <person name="Garg N.S."/>
            <person name="Gelbart W.M."/>
            <person name="Glasser K."/>
            <person name="Glodek A."/>
            <person name="Gong F."/>
            <person name="Gorrell J.H."/>
            <person name="Gu Z."/>
            <person name="Guan P."/>
            <person name="Harris M."/>
            <person name="Harris N.L."/>
            <person name="Harvey D.A."/>
            <person name="Heiman T.J."/>
            <person name="Hernandez J.R."/>
            <person name="Houck J."/>
            <person name="Hostin D."/>
            <person name="Houston K.A."/>
            <person name="Howland T.J."/>
            <person name="Wei M.-H."/>
            <person name="Ibegwam C."/>
            <person name="Jalali M."/>
            <person name="Kalush F."/>
            <person name="Karpen G.H."/>
            <person name="Ke Z."/>
            <person name="Kennison J.A."/>
            <person name="Ketchum K.A."/>
            <person name="Kimmel B.E."/>
            <person name="Kodira C.D."/>
            <person name="Kraft C.L."/>
            <person name="Kravitz S."/>
            <person name="Kulp D."/>
            <person name="Lai Z."/>
            <person name="Lasko P."/>
            <person name="Lei Y."/>
            <person name="Levitsky A.A."/>
            <person name="Li J.H."/>
            <person name="Li Z."/>
            <person name="Liang Y."/>
            <person name="Lin X."/>
            <person name="Liu X."/>
            <person name="Mattei B."/>
            <person name="McIntosh T.C."/>
            <person name="McLeod M.P."/>
            <person name="McPherson D."/>
            <person name="Merkulov G."/>
            <person name="Milshina N.V."/>
            <person name="Mobarry C."/>
            <person name="Morris J."/>
            <person name="Moshrefi A."/>
            <person name="Mount S.M."/>
            <person name="Moy M."/>
            <person name="Murphy B."/>
            <person name="Murphy L."/>
            <person name="Muzny D.M."/>
            <person name="Nelson D.L."/>
            <person name="Nelson D.R."/>
            <person name="Nelson K.A."/>
            <person name="Nixon K."/>
            <person name="Nusskern D.R."/>
            <person name="Pacleb J.M."/>
            <person name="Palazzolo M."/>
            <person name="Pittman G.S."/>
            <person name="Pan S."/>
            <person name="Pollard J."/>
            <person name="Puri V."/>
            <person name="Reese M.G."/>
            <person name="Reinert K."/>
            <person name="Remington K."/>
            <person name="Saunders R.D.C."/>
            <person name="Scheeler F."/>
            <person name="Shen H."/>
            <person name="Shue B.C."/>
            <person name="Siden-Kiamos I."/>
            <person name="Simpson M."/>
            <person name="Skupski M.P."/>
            <person name="Smith T.J."/>
            <person name="Spier E."/>
            <person name="Spradling A.C."/>
            <person name="Stapleton M."/>
            <person name="Strong R."/>
            <person name="Sun E."/>
            <person name="Svirskas R."/>
            <person name="Tector C."/>
            <person name="Turner R."/>
            <person name="Venter E."/>
            <person name="Wang A.H."/>
            <person name="Wang X."/>
            <person name="Wang Z.-Y."/>
            <person name="Wassarman D.A."/>
            <person name="Weinstock G.M."/>
            <person name="Weissenbach J."/>
            <person name="Williams S.M."/>
            <person name="Woodage T."/>
            <person name="Worley K.C."/>
            <person name="Wu D."/>
            <person name="Yang S."/>
            <person name="Yao Q.A."/>
            <person name="Ye J."/>
            <person name="Yeh R.-F."/>
            <person name="Zaveri J.S."/>
            <person name="Zhan M."/>
            <person name="Zhang G."/>
            <person name="Zhao Q."/>
            <person name="Zheng L."/>
            <person name="Zheng X.H."/>
            <person name="Zhong F.N."/>
            <person name="Zhong W."/>
            <person name="Zhou X."/>
            <person name="Zhu S.C."/>
            <person name="Zhu X."/>
            <person name="Smith H.O."/>
            <person name="Gibbs R.A."/>
            <person name="Myers E.W."/>
            <person name="Rubin G.M."/>
            <person name="Venter J.C."/>
        </authorList>
    </citation>
    <scope>NUCLEOTIDE SEQUENCE [LARGE SCALE GENOMIC DNA]</scope>
    <source>
        <strain>Berkeley</strain>
    </source>
</reference>
<reference key="5">
    <citation type="journal article" date="2002" name="Genome Biol.">
        <title>Annotation of the Drosophila melanogaster euchromatic genome: a systematic review.</title>
        <authorList>
            <person name="Misra S."/>
            <person name="Crosby M.A."/>
            <person name="Mungall C.J."/>
            <person name="Matthews B.B."/>
            <person name="Campbell K.S."/>
            <person name="Hradecky P."/>
            <person name="Huang Y."/>
            <person name="Kaminker J.S."/>
            <person name="Millburn G.H."/>
            <person name="Prochnik S.E."/>
            <person name="Smith C.D."/>
            <person name="Tupy J.L."/>
            <person name="Whitfield E.J."/>
            <person name="Bayraktaroglu L."/>
            <person name="Berman B.P."/>
            <person name="Bettencourt B.R."/>
            <person name="Celniker S.E."/>
            <person name="de Grey A.D.N.J."/>
            <person name="Drysdale R.A."/>
            <person name="Harris N.L."/>
            <person name="Richter J."/>
            <person name="Russo S."/>
            <person name="Schroeder A.J."/>
            <person name="Shu S.Q."/>
            <person name="Stapleton M."/>
            <person name="Yamada C."/>
            <person name="Ashburner M."/>
            <person name="Gelbart W.M."/>
            <person name="Rubin G.M."/>
            <person name="Lewis S.E."/>
        </authorList>
    </citation>
    <scope>GENOME REANNOTATION</scope>
    <source>
        <strain>Berkeley</strain>
    </source>
</reference>
<reference key="6">
    <citation type="journal article" date="2002" name="Genome Biol.">
        <title>A Drosophila full-length cDNA resource.</title>
        <authorList>
            <person name="Stapleton M."/>
            <person name="Carlson J.W."/>
            <person name="Brokstein P."/>
            <person name="Yu C."/>
            <person name="Champe M."/>
            <person name="George R.A."/>
            <person name="Guarin H."/>
            <person name="Kronmiller B."/>
            <person name="Pacleb J.M."/>
            <person name="Park S."/>
            <person name="Wan K.H."/>
            <person name="Rubin G.M."/>
            <person name="Celniker S.E."/>
        </authorList>
    </citation>
    <scope>NUCLEOTIDE SEQUENCE [LARGE SCALE MRNA]</scope>
    <source>
        <strain>Berkeley</strain>
        <tissue>Embryo</tissue>
    </source>
</reference>
<reference key="7">
    <citation type="journal article" date="1994" name="EMBO J.">
        <title>HMG-D, the Drosophila melanogaster homologue of HMG 1 protein, is associated with early embryonic chromatin in the absence of histone H1.</title>
        <authorList>
            <person name="Ner S.S."/>
            <person name="Travers A.A."/>
        </authorList>
    </citation>
    <scope>FUNCTION</scope>
    <scope>SUBCELLULAR LOCATION</scope>
</reference>
<reference key="8">
    <citation type="journal article" date="1995" name="EMBO J.">
        <title>HMG-D is an architecture-specific protein that preferentially binds to DNA containing the dinucleotide TG.</title>
        <authorList>
            <person name="Churchill M.E.A."/>
            <person name="Jones D.N.M."/>
            <person name="Glaser T."/>
            <person name="Hefner H."/>
            <person name="Searles M.A."/>
            <person name="Travers A.A."/>
        </authorList>
    </citation>
    <scope>FUNCTION</scope>
    <scope>SUBCELLULAR LOCATION</scope>
</reference>
<reference key="9">
    <citation type="journal article" date="2007" name="Mol. Biosyst.">
        <title>An integrated chemical, mass spectrometric and computational strategy for (quantitative) phosphoproteomics: application to Drosophila melanogaster Kc167 cells.</title>
        <authorList>
            <person name="Bodenmiller B."/>
            <person name="Mueller L.N."/>
            <person name="Pedrioli P.G.A."/>
            <person name="Pflieger D."/>
            <person name="Juenger M.A."/>
            <person name="Eng J.K."/>
            <person name="Aebersold R."/>
            <person name="Tao W.A."/>
        </authorList>
    </citation>
    <scope>PHOSPHORYLATION [LARGE SCALE ANALYSIS] AT SER-103 AND SER-111</scope>
    <scope>IDENTIFICATION BY MASS SPECTROMETRY</scope>
</reference>
<reference key="10">
    <citation type="journal article" date="2008" name="J. Proteome Res.">
        <title>Phosphoproteome analysis of Drosophila melanogaster embryos.</title>
        <authorList>
            <person name="Zhai B."/>
            <person name="Villen J."/>
            <person name="Beausoleil S.A."/>
            <person name="Mintseris J."/>
            <person name="Gygi S.P."/>
        </authorList>
    </citation>
    <scope>PHOSPHORYLATION [LARGE SCALE ANALYSIS] AT SER-10; TYR-12; SER-103 AND SER-111</scope>
    <scope>IDENTIFICATION BY MASS SPECTROMETRY</scope>
    <source>
        <tissue>Embryo</tissue>
    </source>
</reference>
<reference key="11">
    <citation type="journal article" date="1994" name="Structure">
        <title>The solution structure and dynamics of the DNA-binding domain of HMG-D from Drosophila melanogaster.</title>
        <authorList>
            <person name="Jones D.N.M."/>
            <person name="Searles M.A."/>
            <person name="Shaw G.L."/>
            <person name="Churchill M.E.A."/>
            <person name="Ner S.S."/>
            <person name="Keeler J."/>
            <person name="Travers A.A."/>
            <person name="Neuhaus D."/>
        </authorList>
    </citation>
    <scope>STRUCTURE BY NMR OF 2-74</scope>
</reference>
<dbReference type="EMBL" id="M77023">
    <property type="protein sequence ID" value="AAA28609.1"/>
    <property type="molecule type" value="mRNA"/>
</dbReference>
<dbReference type="EMBL" id="X71138">
    <property type="protein sequence ID" value="CAA50468.1"/>
    <property type="molecule type" value="mRNA"/>
</dbReference>
<dbReference type="EMBL" id="AM294353">
    <property type="protein sequence ID" value="CAL26283.1"/>
    <property type="molecule type" value="Genomic_DNA"/>
</dbReference>
<dbReference type="EMBL" id="AM294354">
    <property type="protein sequence ID" value="CAL26284.1"/>
    <property type="molecule type" value="Genomic_DNA"/>
</dbReference>
<dbReference type="EMBL" id="AM294355">
    <property type="protein sequence ID" value="CAL26285.1"/>
    <property type="molecule type" value="Genomic_DNA"/>
</dbReference>
<dbReference type="EMBL" id="AM294356">
    <property type="protein sequence ID" value="CAL26286.1"/>
    <property type="molecule type" value="Genomic_DNA"/>
</dbReference>
<dbReference type="EMBL" id="AM294357">
    <property type="protein sequence ID" value="CAL26287.1"/>
    <property type="molecule type" value="Genomic_DNA"/>
</dbReference>
<dbReference type="EMBL" id="AM294358">
    <property type="protein sequence ID" value="CAL26288.1"/>
    <property type="molecule type" value="Genomic_DNA"/>
</dbReference>
<dbReference type="EMBL" id="AM294359">
    <property type="protein sequence ID" value="CAL26289.1"/>
    <property type="molecule type" value="Genomic_DNA"/>
</dbReference>
<dbReference type="EMBL" id="AM294360">
    <property type="protein sequence ID" value="CAL26290.1"/>
    <property type="molecule type" value="Genomic_DNA"/>
</dbReference>
<dbReference type="EMBL" id="AM294361">
    <property type="protein sequence ID" value="CAL26291.1"/>
    <property type="molecule type" value="Genomic_DNA"/>
</dbReference>
<dbReference type="EMBL" id="AM294362">
    <property type="protein sequence ID" value="CAL26292.1"/>
    <property type="molecule type" value="Genomic_DNA"/>
</dbReference>
<dbReference type="EMBL" id="AM294363">
    <property type="protein sequence ID" value="CAL26293.1"/>
    <property type="molecule type" value="Genomic_DNA"/>
</dbReference>
<dbReference type="EMBL" id="AE013599">
    <property type="protein sequence ID" value="AAF46759.1"/>
    <property type="molecule type" value="Genomic_DNA"/>
</dbReference>
<dbReference type="EMBL" id="AY118333">
    <property type="protein sequence ID" value="AAM48362.1"/>
    <property type="molecule type" value="mRNA"/>
</dbReference>
<dbReference type="PIR" id="A44382">
    <property type="entry name" value="A44382"/>
</dbReference>
<dbReference type="RefSeq" id="NP_001163244.1">
    <property type="nucleotide sequence ID" value="NM_001169773.2"/>
</dbReference>
<dbReference type="RefSeq" id="NP_001286696.1">
    <property type="nucleotide sequence ID" value="NM_001299767.1"/>
</dbReference>
<dbReference type="RefSeq" id="NP_726109.1">
    <property type="nucleotide sequence ID" value="NM_166479.2"/>
</dbReference>
<dbReference type="RefSeq" id="NP_726110.1">
    <property type="nucleotide sequence ID" value="NM_166480.2"/>
</dbReference>
<dbReference type="PDB" id="1HMA">
    <property type="method" value="NMR"/>
    <property type="chains" value="A=2-74"/>
</dbReference>
<dbReference type="PDB" id="1QRV">
    <property type="method" value="X-ray"/>
    <property type="resolution" value="2.20 A"/>
    <property type="chains" value="A/B=2-74"/>
</dbReference>
<dbReference type="PDB" id="3NM9">
    <property type="method" value="X-ray"/>
    <property type="resolution" value="2.85 A"/>
    <property type="chains" value="A/D/G/J/M/P=2-74"/>
</dbReference>
<dbReference type="PDB" id="8R1X">
    <property type="method" value="NMR"/>
    <property type="chains" value="A=1-112"/>
</dbReference>
<dbReference type="PDBsum" id="1HMA"/>
<dbReference type="PDBsum" id="1QRV"/>
<dbReference type="PDBsum" id="3NM9"/>
<dbReference type="PDBsum" id="8R1X"/>
<dbReference type="BMRB" id="Q05783"/>
<dbReference type="SMR" id="Q05783"/>
<dbReference type="BioGRID" id="63106">
    <property type="interactions" value="28"/>
</dbReference>
<dbReference type="DIP" id="DIP-22805N"/>
<dbReference type="FunCoup" id="Q05783">
    <property type="interactions" value="609"/>
</dbReference>
<dbReference type="IntAct" id="Q05783">
    <property type="interactions" value="139"/>
</dbReference>
<dbReference type="STRING" id="7227.FBpp0311598"/>
<dbReference type="iPTMnet" id="Q05783"/>
<dbReference type="MetOSite" id="Q05783"/>
<dbReference type="PaxDb" id="7227-FBpp0071625"/>
<dbReference type="DNASU" id="37481"/>
<dbReference type="EnsemblMetazoa" id="FBtr0071708">
    <property type="protein sequence ID" value="FBpp0071625"/>
    <property type="gene ID" value="FBgn0004362"/>
</dbReference>
<dbReference type="EnsemblMetazoa" id="FBtr0071709">
    <property type="protein sequence ID" value="FBpp0071626"/>
    <property type="gene ID" value="FBgn0004362"/>
</dbReference>
<dbReference type="EnsemblMetazoa" id="FBtr0301410">
    <property type="protein sequence ID" value="FBpp0290624"/>
    <property type="gene ID" value="FBgn0004362"/>
</dbReference>
<dbReference type="EnsemblMetazoa" id="FBtr0345487">
    <property type="protein sequence ID" value="FBpp0311598"/>
    <property type="gene ID" value="FBgn0004362"/>
</dbReference>
<dbReference type="GeneID" id="37481"/>
<dbReference type="KEGG" id="dme:Dmel_CG17950"/>
<dbReference type="AGR" id="FB:FBgn0004362"/>
<dbReference type="CTD" id="37481"/>
<dbReference type="FlyBase" id="FBgn0004362">
    <property type="gene designation" value="HmgD"/>
</dbReference>
<dbReference type="VEuPathDB" id="VectorBase:FBgn0004362"/>
<dbReference type="eggNOG" id="KOG0381">
    <property type="taxonomic scope" value="Eukaryota"/>
</dbReference>
<dbReference type="GeneTree" id="ENSGT00940000167382"/>
<dbReference type="HOGENOM" id="CLU_082854_0_6_1"/>
<dbReference type="InParanoid" id="Q05783"/>
<dbReference type="OMA" id="PLSAYMH"/>
<dbReference type="OrthoDB" id="498543at2759"/>
<dbReference type="PhylomeDB" id="Q05783"/>
<dbReference type="Reactome" id="R-DME-163282">
    <property type="pathway name" value="Mitochondrial transcription initiation"/>
</dbReference>
<dbReference type="Reactome" id="R-DME-9837999">
    <property type="pathway name" value="Mitochondrial protein degradation"/>
</dbReference>
<dbReference type="SignaLink" id="Q05783"/>
<dbReference type="BioGRID-ORCS" id="37481">
    <property type="hits" value="0 hits in 1 CRISPR screen"/>
</dbReference>
<dbReference type="ChiTaRS" id="HmgD">
    <property type="organism name" value="fly"/>
</dbReference>
<dbReference type="EvolutionaryTrace" id="Q05783"/>
<dbReference type="GenomeRNAi" id="37481"/>
<dbReference type="PRO" id="PR:Q05783"/>
<dbReference type="Proteomes" id="UP000000803">
    <property type="component" value="Chromosome 2R"/>
</dbReference>
<dbReference type="Bgee" id="FBgn0004362">
    <property type="expression patterns" value="Expressed in spermatogonium in testis and 237 other cell types or tissues"/>
</dbReference>
<dbReference type="ExpressionAtlas" id="Q05783">
    <property type="expression patterns" value="baseline and differential"/>
</dbReference>
<dbReference type="GO" id="GO:0000785">
    <property type="term" value="C:chromatin"/>
    <property type="evidence" value="ECO:0000314"/>
    <property type="project" value="FlyBase"/>
</dbReference>
<dbReference type="GO" id="GO:0005634">
    <property type="term" value="C:nucleus"/>
    <property type="evidence" value="ECO:0000314"/>
    <property type="project" value="FlyBase"/>
</dbReference>
<dbReference type="GO" id="GO:0003677">
    <property type="term" value="F:DNA binding"/>
    <property type="evidence" value="ECO:0000314"/>
    <property type="project" value="FlyBase"/>
</dbReference>
<dbReference type="GO" id="GO:0008301">
    <property type="term" value="F:DNA binding, bending"/>
    <property type="evidence" value="ECO:0000314"/>
    <property type="project" value="FlyBase"/>
</dbReference>
<dbReference type="GO" id="GO:0003680">
    <property type="term" value="F:minor groove of adenine-thymine-rich DNA binding"/>
    <property type="evidence" value="ECO:0000314"/>
    <property type="project" value="FlyBase"/>
</dbReference>
<dbReference type="GO" id="GO:0006325">
    <property type="term" value="P:chromatin organization"/>
    <property type="evidence" value="ECO:0000314"/>
    <property type="project" value="FlyBase"/>
</dbReference>
<dbReference type="GO" id="GO:0006357">
    <property type="term" value="P:regulation of transcription by RNA polymerase II"/>
    <property type="evidence" value="ECO:0000318"/>
    <property type="project" value="GO_Central"/>
</dbReference>
<dbReference type="CDD" id="cd21994">
    <property type="entry name" value="HMG-box_SSRP1-like"/>
    <property type="match status" value="1"/>
</dbReference>
<dbReference type="FunFam" id="1.10.30.10:FF:000036">
    <property type="entry name" value="high mobility group protein D"/>
    <property type="match status" value="1"/>
</dbReference>
<dbReference type="Gene3D" id="1.10.30.10">
    <property type="entry name" value="High mobility group box domain"/>
    <property type="match status" value="1"/>
</dbReference>
<dbReference type="InterPro" id="IPR009071">
    <property type="entry name" value="HMG_box_dom"/>
</dbReference>
<dbReference type="InterPro" id="IPR036910">
    <property type="entry name" value="HMG_box_dom_sf"/>
</dbReference>
<dbReference type="InterPro" id="IPR050342">
    <property type="entry name" value="HMGB"/>
</dbReference>
<dbReference type="PANTHER" id="PTHR48112:SF20">
    <property type="entry name" value="HIGH MOBILITY GROUP PROTEIN D-RELATED"/>
    <property type="match status" value="1"/>
</dbReference>
<dbReference type="PANTHER" id="PTHR48112">
    <property type="entry name" value="HIGH MOBILITY GROUP PROTEIN DSP1"/>
    <property type="match status" value="1"/>
</dbReference>
<dbReference type="Pfam" id="PF00505">
    <property type="entry name" value="HMG_box"/>
    <property type="match status" value="1"/>
</dbReference>
<dbReference type="SMART" id="SM00398">
    <property type="entry name" value="HMG"/>
    <property type="match status" value="1"/>
</dbReference>
<dbReference type="SUPFAM" id="SSF47095">
    <property type="entry name" value="HMG-box"/>
    <property type="match status" value="1"/>
</dbReference>
<dbReference type="PROSITE" id="PS50118">
    <property type="entry name" value="HMG_BOX_2"/>
    <property type="match status" value="1"/>
</dbReference>
<feature type="chain" id="PRO_0000048552" description="High mobility group protein D">
    <location>
        <begin position="1"/>
        <end position="112"/>
    </location>
</feature>
<feature type="DNA-binding region" description="HMG box" evidence="1">
    <location>
        <begin position="5"/>
        <end position="71"/>
    </location>
</feature>
<feature type="region of interest" description="Disordered" evidence="2">
    <location>
        <begin position="72"/>
        <end position="112"/>
    </location>
</feature>
<feature type="compositionally biased region" description="Basic residues" evidence="2">
    <location>
        <begin position="84"/>
        <end position="98"/>
    </location>
</feature>
<feature type="compositionally biased region" description="Acidic residues" evidence="2">
    <location>
        <begin position="103"/>
        <end position="112"/>
    </location>
</feature>
<feature type="modified residue" description="Phosphoserine" evidence="5">
    <location>
        <position position="10"/>
    </location>
</feature>
<feature type="modified residue" description="Phosphotyrosine" evidence="5">
    <location>
        <position position="12"/>
    </location>
</feature>
<feature type="modified residue" description="Phosphoserine" evidence="4 5">
    <location>
        <position position="103"/>
    </location>
</feature>
<feature type="modified residue" description="Phosphoserine" evidence="4 5">
    <location>
        <position position="111"/>
    </location>
</feature>
<feature type="helix" evidence="9">
    <location>
        <begin position="11"/>
        <end position="25"/>
    </location>
</feature>
<feature type="strand" evidence="10">
    <location>
        <begin position="27"/>
        <end position="29"/>
    </location>
</feature>
<feature type="helix" evidence="9">
    <location>
        <begin position="32"/>
        <end position="45"/>
    </location>
</feature>
<feature type="helix" evidence="9">
    <location>
        <begin position="50"/>
        <end position="70"/>
    </location>
</feature>
<feature type="turn" evidence="9">
    <location>
        <begin position="71"/>
        <end position="73"/>
    </location>
</feature>
<comment type="function">
    <text evidence="3 6 7">Binds preferentially single-stranded DNA and unwinds double-stranded DNA. Prefers sites containing the sequence 5'-ttg-3'. Facilitates DNA bending. Associated with early embryonic chromatin in the absence of histone H1.</text>
</comment>
<comment type="subcellular location">
    <subcellularLocation>
        <location>Nucleus</location>
    </subcellularLocation>
    <subcellularLocation>
        <location>Chromosome</location>
    </subcellularLocation>
</comment>
<comment type="developmental stage">
    <text evidence="3">Present in all stages of development.</text>
</comment>
<comment type="similarity">
    <text evidence="8">Belongs to the HMGB family.</text>
</comment>
<evidence type="ECO:0000255" key="1">
    <source>
        <dbReference type="PROSITE-ProRule" id="PRU00267"/>
    </source>
</evidence>
<evidence type="ECO:0000256" key="2">
    <source>
        <dbReference type="SAM" id="MobiDB-lite"/>
    </source>
</evidence>
<evidence type="ECO:0000269" key="3">
    <source>
    </source>
</evidence>
<evidence type="ECO:0000269" key="4">
    <source>
    </source>
</evidence>
<evidence type="ECO:0000269" key="5">
    <source>
    </source>
</evidence>
<evidence type="ECO:0000269" key="6">
    <source>
    </source>
</evidence>
<evidence type="ECO:0000269" key="7">
    <source>
    </source>
</evidence>
<evidence type="ECO:0000305" key="8"/>
<evidence type="ECO:0007829" key="9">
    <source>
        <dbReference type="PDB" id="1QRV"/>
    </source>
</evidence>
<evidence type="ECO:0007829" key="10">
    <source>
        <dbReference type="PDB" id="3NM9"/>
    </source>
</evidence>